<reference key="1">
    <citation type="journal article" date="2009" name="Proc. Natl. Acad. Sci. U.S.A.">
        <title>Characterizing a model human gut microbiota composed of members of its two dominant bacterial phyla.</title>
        <authorList>
            <person name="Mahowald M.A."/>
            <person name="Rey F.E."/>
            <person name="Seedorf H."/>
            <person name="Turnbaugh P.J."/>
            <person name="Fulton R.S."/>
            <person name="Wollam A."/>
            <person name="Shah N."/>
            <person name="Wang C."/>
            <person name="Magrini V."/>
            <person name="Wilson R.K."/>
            <person name="Cantarel B.L."/>
            <person name="Coutinho P.M."/>
            <person name="Henrissat B."/>
            <person name="Crock L.W."/>
            <person name="Russell A."/>
            <person name="Verberkmoes N.C."/>
            <person name="Hettich R.L."/>
            <person name="Gordon J.I."/>
        </authorList>
    </citation>
    <scope>NUCLEOTIDE SEQUENCE [LARGE SCALE GENOMIC DNA]</scope>
    <source>
        <strain>ATCC 33656 / DSM 3377 / JCM 17463 / KCTC 5835 / LMG 30912 / VPI 0990</strain>
    </source>
</reference>
<evidence type="ECO:0000255" key="1">
    <source>
        <dbReference type="HAMAP-Rule" id="MF_00092"/>
    </source>
</evidence>
<comment type="function">
    <text evidence="1">Endonuclease that is involved in the suppression of homologous recombination and thus may have a key role in the control of bacterial genetic diversity.</text>
</comment>
<comment type="function">
    <text evidence="1">Acts as a ribosome collision sensor, splitting the ribosome into its 2 subunits. Detects stalled/collided 70S ribosomes which it binds and splits by an ATP-hydrolysis driven conformational change. Acts upstream of the ribosome quality control system (RQC), a ribosome-associated complex that mediates the extraction of incompletely synthesized nascent chains from stalled ribosomes and their subsequent degradation. Probably generates substrates for RQC.</text>
</comment>
<comment type="subunit">
    <text evidence="1">Homodimer. Binds to stalled ribosomes, contacting rRNA.</text>
</comment>
<comment type="similarity">
    <text evidence="1">Belongs to the DNA mismatch repair MutS family. MutS2 subfamily.</text>
</comment>
<accession>C4ZI07</accession>
<protein>
    <recommendedName>
        <fullName evidence="1">Endonuclease MutS2</fullName>
        <ecNumber evidence="1">3.1.-.-</ecNumber>
    </recommendedName>
    <alternativeName>
        <fullName evidence="1">Ribosome-associated protein quality control-upstream factor</fullName>
        <shortName evidence="1">RQC-upstream factor</shortName>
        <shortName evidence="1">RqcU</shortName>
        <ecNumber evidence="1">3.6.4.-</ecNumber>
    </alternativeName>
</protein>
<proteinExistence type="inferred from homology"/>
<sequence>MNKKVYKTLEYNKILTMLSSYAACDETKKRCLSLEPITDLYEIRHLQTTTADALSRLYKDSGVSFVGIHNVHASLKRLDIGGALNTTELLRICSLLEVAKRVKAYGRSAMDNEKQDSLSGLFAGIEPVSALCDEIKRCILSEEEIADDASPELFKIRKSIRGMNDRIHAQLTKLMNNSTTRTYLQDAVVTMRDGRYCLPVKAEAKGNVPGMMHDQSSTGSTLFIEPMAVVNLNNELKELFIKEQEEIEKILAALSDKVAMNAAALEQDYEILSELDFIFAKANLAKSYNGVAPDFNTDGHINIRKGRHPLLDAKKVVPIDVRLGEDYKQLIITGPNTGGKTVSLKTVGLLTLMGQAGLHIPAADRSKLAIFEDVFADIGDEQSIEQSLSTFSSHMTNIVKILEKADDRSLCLFDELCSGTDPTEGAALAISILNRLHQYGAITMATTHYSELKVYALSTDGVENACCEFNVETLSPTYRLLIGIPGKSNAFAISSKLGLDENIIEDAKSRINDNDLDFEDLIASLESQRQTIEKEQLEINSYKAEIEKLKKQLEEKNERIDKSKDKILREANEEAYKILQDAKELADKTIRNFNKYGQGQAPMSQMEKERSALRDKMNDKEKKLSDIKKNTAKANHKAPKKLRIGDSVLVLSLNLKGTVHTLPNAKGDLYVQMGILRSLVNINDLVLLNDDVSPAKKYGGSGSKIKMSKSLSVSSEINLIGKTTDEALALLDKYLDDAYIAHLSSVRIVHGKGTGALRKAVHGLLKRTKTIAEYHLGEFGEGDAGVTIATFK</sequence>
<keyword id="KW-0067">ATP-binding</keyword>
<keyword id="KW-0238">DNA-binding</keyword>
<keyword id="KW-0255">Endonuclease</keyword>
<keyword id="KW-0378">Hydrolase</keyword>
<keyword id="KW-0540">Nuclease</keyword>
<keyword id="KW-0547">Nucleotide-binding</keyword>
<keyword id="KW-0694">RNA-binding</keyword>
<keyword id="KW-0699">rRNA-binding</keyword>
<organism>
    <name type="scientific">Agathobacter rectalis (strain ATCC 33656 / DSM 3377 / JCM 17463 / KCTC 5835 / VPI 0990)</name>
    <name type="common">Eubacterium rectale</name>
    <dbReference type="NCBI Taxonomy" id="515619"/>
    <lineage>
        <taxon>Bacteria</taxon>
        <taxon>Bacillati</taxon>
        <taxon>Bacillota</taxon>
        <taxon>Clostridia</taxon>
        <taxon>Lachnospirales</taxon>
        <taxon>Lachnospiraceae</taxon>
        <taxon>Agathobacter</taxon>
    </lineage>
</organism>
<dbReference type="EC" id="3.1.-.-" evidence="1"/>
<dbReference type="EC" id="3.6.4.-" evidence="1"/>
<dbReference type="EMBL" id="CP001107">
    <property type="protein sequence ID" value="ACR76644.1"/>
    <property type="molecule type" value="Genomic_DNA"/>
</dbReference>
<dbReference type="RefSeq" id="WP_012743671.1">
    <property type="nucleotide sequence ID" value="NC_012781.1"/>
</dbReference>
<dbReference type="SMR" id="C4ZI07"/>
<dbReference type="STRING" id="515619.EUBREC_2915"/>
<dbReference type="PaxDb" id="515619-EUBREC_2915"/>
<dbReference type="GeneID" id="86989617"/>
<dbReference type="KEGG" id="ere:EUBREC_2915"/>
<dbReference type="HOGENOM" id="CLU_011252_2_1_9"/>
<dbReference type="Proteomes" id="UP000001477">
    <property type="component" value="Chromosome"/>
</dbReference>
<dbReference type="GO" id="GO:0005524">
    <property type="term" value="F:ATP binding"/>
    <property type="evidence" value="ECO:0007669"/>
    <property type="project" value="UniProtKB-UniRule"/>
</dbReference>
<dbReference type="GO" id="GO:0016887">
    <property type="term" value="F:ATP hydrolysis activity"/>
    <property type="evidence" value="ECO:0007669"/>
    <property type="project" value="InterPro"/>
</dbReference>
<dbReference type="GO" id="GO:0140664">
    <property type="term" value="F:ATP-dependent DNA damage sensor activity"/>
    <property type="evidence" value="ECO:0007669"/>
    <property type="project" value="InterPro"/>
</dbReference>
<dbReference type="GO" id="GO:0004519">
    <property type="term" value="F:endonuclease activity"/>
    <property type="evidence" value="ECO:0007669"/>
    <property type="project" value="UniProtKB-UniRule"/>
</dbReference>
<dbReference type="GO" id="GO:0030983">
    <property type="term" value="F:mismatched DNA binding"/>
    <property type="evidence" value="ECO:0007669"/>
    <property type="project" value="InterPro"/>
</dbReference>
<dbReference type="GO" id="GO:0043023">
    <property type="term" value="F:ribosomal large subunit binding"/>
    <property type="evidence" value="ECO:0007669"/>
    <property type="project" value="UniProtKB-UniRule"/>
</dbReference>
<dbReference type="GO" id="GO:0019843">
    <property type="term" value="F:rRNA binding"/>
    <property type="evidence" value="ECO:0007669"/>
    <property type="project" value="UniProtKB-UniRule"/>
</dbReference>
<dbReference type="GO" id="GO:0006298">
    <property type="term" value="P:mismatch repair"/>
    <property type="evidence" value="ECO:0007669"/>
    <property type="project" value="InterPro"/>
</dbReference>
<dbReference type="GO" id="GO:0045910">
    <property type="term" value="P:negative regulation of DNA recombination"/>
    <property type="evidence" value="ECO:0007669"/>
    <property type="project" value="InterPro"/>
</dbReference>
<dbReference type="GO" id="GO:0072344">
    <property type="term" value="P:rescue of stalled ribosome"/>
    <property type="evidence" value="ECO:0007669"/>
    <property type="project" value="UniProtKB-UniRule"/>
</dbReference>
<dbReference type="CDD" id="cd03280">
    <property type="entry name" value="ABC_MutS2"/>
    <property type="match status" value="1"/>
</dbReference>
<dbReference type="FunFam" id="3.40.50.300:FF:000830">
    <property type="entry name" value="Endonuclease MutS2"/>
    <property type="match status" value="1"/>
</dbReference>
<dbReference type="Gene3D" id="3.30.1370.110">
    <property type="match status" value="1"/>
</dbReference>
<dbReference type="Gene3D" id="3.40.50.300">
    <property type="entry name" value="P-loop containing nucleotide triphosphate hydrolases"/>
    <property type="match status" value="1"/>
</dbReference>
<dbReference type="HAMAP" id="MF_00092">
    <property type="entry name" value="MutS2"/>
    <property type="match status" value="1"/>
</dbReference>
<dbReference type="InterPro" id="IPR000432">
    <property type="entry name" value="DNA_mismatch_repair_MutS_C"/>
</dbReference>
<dbReference type="InterPro" id="IPR007696">
    <property type="entry name" value="DNA_mismatch_repair_MutS_core"/>
</dbReference>
<dbReference type="InterPro" id="IPR036187">
    <property type="entry name" value="DNA_mismatch_repair_MutS_sf"/>
</dbReference>
<dbReference type="InterPro" id="IPR046893">
    <property type="entry name" value="MSSS"/>
</dbReference>
<dbReference type="InterPro" id="IPR045076">
    <property type="entry name" value="MutS"/>
</dbReference>
<dbReference type="InterPro" id="IPR005747">
    <property type="entry name" value="MutS2"/>
</dbReference>
<dbReference type="InterPro" id="IPR027417">
    <property type="entry name" value="P-loop_NTPase"/>
</dbReference>
<dbReference type="InterPro" id="IPR002625">
    <property type="entry name" value="Smr_dom"/>
</dbReference>
<dbReference type="InterPro" id="IPR036063">
    <property type="entry name" value="Smr_dom_sf"/>
</dbReference>
<dbReference type="NCBIfam" id="TIGR01069">
    <property type="entry name" value="mutS2"/>
    <property type="match status" value="1"/>
</dbReference>
<dbReference type="PANTHER" id="PTHR48466:SF2">
    <property type="entry name" value="OS10G0509000 PROTEIN"/>
    <property type="match status" value="1"/>
</dbReference>
<dbReference type="PANTHER" id="PTHR48466">
    <property type="entry name" value="OS10G0509000 PROTEIN-RELATED"/>
    <property type="match status" value="1"/>
</dbReference>
<dbReference type="Pfam" id="PF20297">
    <property type="entry name" value="MSSS"/>
    <property type="match status" value="1"/>
</dbReference>
<dbReference type="Pfam" id="PF00488">
    <property type="entry name" value="MutS_V"/>
    <property type="match status" value="1"/>
</dbReference>
<dbReference type="Pfam" id="PF01713">
    <property type="entry name" value="Smr"/>
    <property type="match status" value="1"/>
</dbReference>
<dbReference type="PIRSF" id="PIRSF005814">
    <property type="entry name" value="MutS_YshD"/>
    <property type="match status" value="1"/>
</dbReference>
<dbReference type="SMART" id="SM00534">
    <property type="entry name" value="MUTSac"/>
    <property type="match status" value="1"/>
</dbReference>
<dbReference type="SMART" id="SM00533">
    <property type="entry name" value="MUTSd"/>
    <property type="match status" value="1"/>
</dbReference>
<dbReference type="SMART" id="SM00463">
    <property type="entry name" value="SMR"/>
    <property type="match status" value="1"/>
</dbReference>
<dbReference type="SUPFAM" id="SSF48334">
    <property type="entry name" value="DNA repair protein MutS, domain III"/>
    <property type="match status" value="1"/>
</dbReference>
<dbReference type="SUPFAM" id="SSF52540">
    <property type="entry name" value="P-loop containing nucleoside triphosphate hydrolases"/>
    <property type="match status" value="1"/>
</dbReference>
<dbReference type="SUPFAM" id="SSF160443">
    <property type="entry name" value="SMR domain-like"/>
    <property type="match status" value="1"/>
</dbReference>
<dbReference type="PROSITE" id="PS00486">
    <property type="entry name" value="DNA_MISMATCH_REPAIR_2"/>
    <property type="match status" value="1"/>
</dbReference>
<dbReference type="PROSITE" id="PS50828">
    <property type="entry name" value="SMR"/>
    <property type="match status" value="1"/>
</dbReference>
<feature type="chain" id="PRO_1000202680" description="Endonuclease MutS2">
    <location>
        <begin position="1"/>
        <end position="792"/>
    </location>
</feature>
<feature type="domain" description="Smr" evidence="1">
    <location>
        <begin position="717"/>
        <end position="792"/>
    </location>
</feature>
<feature type="binding site" evidence="1">
    <location>
        <begin position="334"/>
        <end position="341"/>
    </location>
    <ligand>
        <name>ATP</name>
        <dbReference type="ChEBI" id="CHEBI:30616"/>
    </ligand>
</feature>
<name>MUTS2_AGARV</name>
<gene>
    <name evidence="1" type="primary">mutS2</name>
    <name evidence="1" type="synonym">rqcU</name>
    <name type="ordered locus">EUBREC_2915</name>
</gene>